<accession>A6LQX4</accession>
<evidence type="ECO:0000255" key="1">
    <source>
        <dbReference type="HAMAP-Rule" id="MF_01232"/>
    </source>
</evidence>
<evidence type="ECO:0000256" key="2">
    <source>
        <dbReference type="SAM" id="MobiDB-lite"/>
    </source>
</evidence>
<proteinExistence type="inferred from homology"/>
<dbReference type="EMBL" id="CP000721">
    <property type="protein sequence ID" value="ABR32754.1"/>
    <property type="molecule type" value="Genomic_DNA"/>
</dbReference>
<dbReference type="KEGG" id="cbe:Cbei_0567"/>
<dbReference type="eggNOG" id="COG2718">
    <property type="taxonomic scope" value="Bacteria"/>
</dbReference>
<dbReference type="HOGENOM" id="CLU_049702_2_0_9"/>
<dbReference type="Proteomes" id="UP000000565">
    <property type="component" value="Chromosome"/>
</dbReference>
<dbReference type="HAMAP" id="MF_01232">
    <property type="entry name" value="UPF0229"/>
    <property type="match status" value="1"/>
</dbReference>
<dbReference type="InterPro" id="IPR014230">
    <property type="entry name" value="Spore_YhbH"/>
</dbReference>
<dbReference type="InterPro" id="IPR006698">
    <property type="entry name" value="UPF0229"/>
</dbReference>
<dbReference type="InterPro" id="IPR036465">
    <property type="entry name" value="vWFA_dom_sf"/>
</dbReference>
<dbReference type="NCBIfam" id="TIGR02877">
    <property type="entry name" value="spore_yhbH"/>
    <property type="match status" value="1"/>
</dbReference>
<dbReference type="PANTHER" id="PTHR30510">
    <property type="entry name" value="UPF0229 PROTEIN YEAH"/>
    <property type="match status" value="1"/>
</dbReference>
<dbReference type="PANTHER" id="PTHR30510:SF2">
    <property type="entry name" value="UPF0229 PROTEIN YEAH"/>
    <property type="match status" value="1"/>
</dbReference>
<dbReference type="Pfam" id="PF04285">
    <property type="entry name" value="DUF444"/>
    <property type="match status" value="1"/>
</dbReference>
<dbReference type="SUPFAM" id="SSF53300">
    <property type="entry name" value="vWA-like"/>
    <property type="match status" value="1"/>
</dbReference>
<name>Y567_CLOB8</name>
<feature type="chain" id="PRO_1000085716" description="UPF0229 protein Cbei_0567">
    <location>
        <begin position="1"/>
        <end position="390"/>
    </location>
</feature>
<feature type="region of interest" description="Disordered" evidence="2">
    <location>
        <begin position="77"/>
        <end position="108"/>
    </location>
</feature>
<feature type="compositionally biased region" description="Low complexity" evidence="2">
    <location>
        <begin position="89"/>
        <end position="103"/>
    </location>
</feature>
<organism>
    <name type="scientific">Clostridium beijerinckii (strain ATCC 51743 / NCIMB 8052)</name>
    <name type="common">Clostridium acetobutylicum</name>
    <dbReference type="NCBI Taxonomy" id="290402"/>
    <lineage>
        <taxon>Bacteria</taxon>
        <taxon>Bacillati</taxon>
        <taxon>Bacillota</taxon>
        <taxon>Clostridia</taxon>
        <taxon>Eubacteriales</taxon>
        <taxon>Clostridiaceae</taxon>
        <taxon>Clostridium</taxon>
    </lineage>
</organism>
<gene>
    <name type="ordered locus">Cbei_0567</name>
</gene>
<sequence>MAIFRDYTNNQIDHDRSIEDRRRHRQLVEKSIKENLGDILSEESIVGESKNKKFKIPIKGIKEYQFVYGKNSKGVASGVGNEKRGEKLGNGNKKLAKGNQGAGNEEGDDIYETEITLEELMDYISEDLNLPNLDQKKYSEIVTETSGKKRGYQTHGIRPRLAKKKTVMSKIARKQGKKRALKELESDEELERFPFREEDLRYYRVKLKPKKDSNAVMLFIMDASGSMDVTKKYLARSYFFVLATFLKRKYNNIAFEFIYHTTVAKRVDEFEFFHKSESGGTYISSGINEALKVIEEKYPPAAWNIYSIYASDGDNWSEDNEKAVAAVKDICEVSNMFGYAELLPSTYTTTMYHKFKKEITNEKFVPVIIKEKKDLWDALKIMLRKELKEE</sequence>
<protein>
    <recommendedName>
        <fullName evidence="1">UPF0229 protein Cbei_0567</fullName>
    </recommendedName>
</protein>
<comment type="similarity">
    <text evidence="1">Belongs to the UPF0229 family.</text>
</comment>
<reference key="1">
    <citation type="submission" date="2007-06" db="EMBL/GenBank/DDBJ databases">
        <title>Complete sequence of Clostridium beijerinckii NCIMB 8052.</title>
        <authorList>
            <consortium name="US DOE Joint Genome Institute"/>
            <person name="Copeland A."/>
            <person name="Lucas S."/>
            <person name="Lapidus A."/>
            <person name="Barry K."/>
            <person name="Detter J.C."/>
            <person name="Glavina del Rio T."/>
            <person name="Hammon N."/>
            <person name="Israni S."/>
            <person name="Dalin E."/>
            <person name="Tice H."/>
            <person name="Pitluck S."/>
            <person name="Sims D."/>
            <person name="Brettin T."/>
            <person name="Bruce D."/>
            <person name="Tapia R."/>
            <person name="Brainard J."/>
            <person name="Schmutz J."/>
            <person name="Larimer F."/>
            <person name="Land M."/>
            <person name="Hauser L."/>
            <person name="Kyrpides N."/>
            <person name="Mikhailova N."/>
            <person name="Bennet G."/>
            <person name="Cann I."/>
            <person name="Chen J.-S."/>
            <person name="Contreras A.L."/>
            <person name="Jones D."/>
            <person name="Kashket E."/>
            <person name="Mitchell W."/>
            <person name="Stoddard S."/>
            <person name="Schwarz W."/>
            <person name="Qureshi N."/>
            <person name="Young M."/>
            <person name="Shi Z."/>
            <person name="Ezeji T."/>
            <person name="White B."/>
            <person name="Blaschek H."/>
            <person name="Richardson P."/>
        </authorList>
    </citation>
    <scope>NUCLEOTIDE SEQUENCE [LARGE SCALE GENOMIC DNA]</scope>
    <source>
        <strain>ATCC 51743 / NCIMB 8052</strain>
    </source>
</reference>